<comment type="function">
    <text evidence="3">Positive transcriptional regulator that is absolutely required for the expression of lactate racemase (Lar) activity. Controls Lar expression by sensing the L-/D-lactate ration. Binds to a 16-bp palindromic sequence (Lar box motif) that is present in the larR-larA intergenic region, allowing transcription of the larABCDE operon.</text>
</comment>
<comment type="activity regulation">
    <text evidence="3">L-lactate acts as a positive effector on the binding and multimerization of LarR on DNA, while D-lactate antagonizes the positive effect of L-lactate.</text>
</comment>
<comment type="subunit">
    <text evidence="3">Multimerizes on DNA. Multimerization is required for transcription activation.</text>
</comment>
<comment type="induction">
    <text evidence="2">Induced by L-lactate but not by a racemic mixture of DL-lactate. Makes part of the larR(MN)QO operon.</text>
</comment>
<sequence>MVLTDIEYLLSYLEAHHVPTIKKKRHTYLTYHGLAEHYTYVLKDGIIKNSIILQDGREYNLSYIAKPDVISLLRDEVSRSTDQPFNVRIESEYATFYQVNRVAFWKYVNSTPELQNYVKNYYRKKLSENILRLQRMVMNGKKGAICAFIYSLVDLFGRKVNEGILIDFVVTNDDIAGFCGISSRSSVNRMLKELRTDGVITVKNHKFIIQDVSYLLDQIAN</sequence>
<name>LARR_LACPL</name>
<organism>
    <name type="scientific">Lactiplantibacillus plantarum (strain ATCC BAA-793 / NCIMB 8826 / WCFS1)</name>
    <name type="common">Lactobacillus plantarum</name>
    <dbReference type="NCBI Taxonomy" id="220668"/>
    <lineage>
        <taxon>Bacteria</taxon>
        <taxon>Bacillati</taxon>
        <taxon>Bacillota</taxon>
        <taxon>Bacilli</taxon>
        <taxon>Lactobacillales</taxon>
        <taxon>Lactobacillaceae</taxon>
        <taxon>Lactiplantibacillus</taxon>
    </lineage>
</organism>
<protein>
    <recommendedName>
        <fullName evidence="5">Lactate racemization regulatory protein</fullName>
    </recommendedName>
    <alternativeName>
        <fullName evidence="5">Transcriptional activator LarR</fullName>
    </alternativeName>
</protein>
<gene>
    <name evidence="4" type="primary">larR</name>
    <name evidence="6" type="ordered locus">lp_0103</name>
</gene>
<keyword id="KW-0010">Activator</keyword>
<keyword id="KW-0238">DNA-binding</keyword>
<keyword id="KW-1185">Reference proteome</keyword>
<keyword id="KW-0804">Transcription</keyword>
<keyword id="KW-0805">Transcription regulation</keyword>
<feature type="chain" id="PRO_0000441648" description="Lactate racemization regulatory protein">
    <location>
        <begin position="1"/>
        <end position="221"/>
    </location>
</feature>
<feature type="domain" description="HTH crp-type" evidence="1">
    <location>
        <begin position="139"/>
        <end position="213"/>
    </location>
</feature>
<feature type="DNA-binding region" description="H-T-H motif" evidence="1">
    <location>
        <begin position="172"/>
        <end position="192"/>
    </location>
</feature>
<reference key="1">
    <citation type="journal article" date="2003" name="Proc. Natl. Acad. Sci. U.S.A.">
        <title>Complete genome sequence of Lactobacillus plantarum WCFS1.</title>
        <authorList>
            <person name="Kleerebezem M."/>
            <person name="Boekhorst J."/>
            <person name="van Kranenburg R."/>
            <person name="Molenaar D."/>
            <person name="Kuipers O.P."/>
            <person name="Leer R."/>
            <person name="Tarchini R."/>
            <person name="Peters S.A."/>
            <person name="Sandbrink H.M."/>
            <person name="Fiers M.W.E.J."/>
            <person name="Stiekema W."/>
            <person name="Klein Lankhorst R.M."/>
            <person name="Bron P.A."/>
            <person name="Hoffer S.M."/>
            <person name="Nierop Groot M.N."/>
            <person name="Kerkhoven R."/>
            <person name="De Vries M."/>
            <person name="Ursing B."/>
            <person name="De Vos W.M."/>
            <person name="Siezen R.J."/>
        </authorList>
    </citation>
    <scope>NUCLEOTIDE SEQUENCE [LARGE SCALE GENOMIC DNA]</scope>
    <source>
        <strain>ATCC BAA-793 / NCIMB 8826 / WCFS1</strain>
    </source>
</reference>
<reference key="2">
    <citation type="journal article" date="2012" name="J. Bacteriol.">
        <title>Complete resequencing and reannotation of the Lactobacillus plantarum WCFS1 genome.</title>
        <authorList>
            <person name="Siezen R.J."/>
            <person name="Francke C."/>
            <person name="Renckens B."/>
            <person name="Boekhorst J."/>
            <person name="Wels M."/>
            <person name="Kleerebezem M."/>
            <person name="van Hijum S.A."/>
        </authorList>
    </citation>
    <scope>NUCLEOTIDE SEQUENCE [LARGE SCALE GENOMIC DNA]</scope>
    <scope>GENOME REANNOTATION</scope>
    <source>
        <strain>ATCC BAA-793 / NCIMB 8826 / WCFS1</strain>
    </source>
</reference>
<reference key="3">
    <citation type="journal article" date="2014" name="Nat. Commun.">
        <title>Lactate racemase is a nickel-dependent enzyme activated by a widespread maturation system.</title>
        <authorList>
            <person name="Desguin B."/>
            <person name="Goffin P."/>
            <person name="Viaene E."/>
            <person name="Kleerebezem M."/>
            <person name="Martin-Diaconescu V."/>
            <person name="Maroney M.J."/>
            <person name="Declercq J.P."/>
            <person name="Soumillion P."/>
            <person name="Hols P."/>
        </authorList>
    </citation>
    <scope>INDUCTION</scope>
    <source>
        <strain>ATCC BAA-793 / NCIMB 8826 / WCFS1</strain>
    </source>
</reference>
<reference key="4">
    <citation type="journal article" date="2015" name="J. Bacteriol.">
        <title>Enantioselective regulation of lactate racemization by LarR in Lactobacillus plantarum.</title>
        <authorList>
            <person name="Desguin B."/>
            <person name="Goffin P."/>
            <person name="Bakouche N."/>
            <person name="Diman A."/>
            <person name="Viaene E."/>
            <person name="Dandoy D."/>
            <person name="Fontaine L."/>
            <person name="Hallet B."/>
            <person name="Hols P."/>
        </authorList>
    </citation>
    <scope>FUNCTION</scope>
    <scope>ACTIVITY REGULATION</scope>
    <scope>SUBUNIT</scope>
    <scope>DNA-BINDING</scope>
    <source>
        <strain>ATCC BAA-793 / NCIMB 8826 / WCFS1</strain>
    </source>
</reference>
<proteinExistence type="evidence at protein level"/>
<accession>F9USS8</accession>
<dbReference type="EMBL" id="AL935263">
    <property type="protein sequence ID" value="CCC77659.1"/>
    <property type="molecule type" value="Genomic_DNA"/>
</dbReference>
<dbReference type="RefSeq" id="WP_003641710.1">
    <property type="nucleotide sequence ID" value="NC_004567.2"/>
</dbReference>
<dbReference type="RefSeq" id="YP_004888173.1">
    <property type="nucleotide sequence ID" value="NC_004567.2"/>
</dbReference>
<dbReference type="SMR" id="F9USS8"/>
<dbReference type="STRING" id="220668.lp_0103"/>
<dbReference type="DNASU" id="1061368"/>
<dbReference type="EnsemblBacteria" id="CCC77659">
    <property type="protein sequence ID" value="CCC77659"/>
    <property type="gene ID" value="lp_0103"/>
</dbReference>
<dbReference type="KEGG" id="lpl:lp_0103"/>
<dbReference type="PATRIC" id="fig|220668.9.peg.83"/>
<dbReference type="eggNOG" id="COG0664">
    <property type="taxonomic scope" value="Bacteria"/>
</dbReference>
<dbReference type="HOGENOM" id="CLU_075053_12_0_9"/>
<dbReference type="OrthoDB" id="9810708at2"/>
<dbReference type="PhylomeDB" id="F9USS8"/>
<dbReference type="Proteomes" id="UP000000432">
    <property type="component" value="Chromosome"/>
</dbReference>
<dbReference type="GO" id="GO:0003677">
    <property type="term" value="F:DNA binding"/>
    <property type="evidence" value="ECO:0007669"/>
    <property type="project" value="UniProtKB-KW"/>
</dbReference>
<dbReference type="GO" id="GO:0003700">
    <property type="term" value="F:DNA-binding transcription factor activity"/>
    <property type="evidence" value="ECO:0007669"/>
    <property type="project" value="InterPro"/>
</dbReference>
<dbReference type="Gene3D" id="2.60.120.10">
    <property type="entry name" value="Jelly Rolls"/>
    <property type="match status" value="1"/>
</dbReference>
<dbReference type="Gene3D" id="1.10.10.10">
    <property type="entry name" value="Winged helix-like DNA-binding domain superfamily/Winged helix DNA-binding domain"/>
    <property type="match status" value="1"/>
</dbReference>
<dbReference type="InterPro" id="IPR018490">
    <property type="entry name" value="cNMP-bd_dom_sf"/>
</dbReference>
<dbReference type="InterPro" id="IPR012318">
    <property type="entry name" value="HTH_CRP"/>
</dbReference>
<dbReference type="InterPro" id="IPR014710">
    <property type="entry name" value="RmlC-like_jellyroll"/>
</dbReference>
<dbReference type="InterPro" id="IPR018335">
    <property type="entry name" value="Tscrpt_reg_HTH_Crp-type_CS"/>
</dbReference>
<dbReference type="InterPro" id="IPR036388">
    <property type="entry name" value="WH-like_DNA-bd_sf"/>
</dbReference>
<dbReference type="InterPro" id="IPR036390">
    <property type="entry name" value="WH_DNA-bd_sf"/>
</dbReference>
<dbReference type="Pfam" id="PF13545">
    <property type="entry name" value="HTH_Crp_2"/>
    <property type="match status" value="1"/>
</dbReference>
<dbReference type="SMART" id="SM00419">
    <property type="entry name" value="HTH_CRP"/>
    <property type="match status" value="1"/>
</dbReference>
<dbReference type="SUPFAM" id="SSF51206">
    <property type="entry name" value="cAMP-binding domain-like"/>
    <property type="match status" value="1"/>
</dbReference>
<dbReference type="SUPFAM" id="SSF46785">
    <property type="entry name" value="Winged helix' DNA-binding domain"/>
    <property type="match status" value="1"/>
</dbReference>
<dbReference type="PROSITE" id="PS00042">
    <property type="entry name" value="HTH_CRP_1"/>
    <property type="match status" value="1"/>
</dbReference>
<dbReference type="PROSITE" id="PS51063">
    <property type="entry name" value="HTH_CRP_2"/>
    <property type="match status" value="1"/>
</dbReference>
<evidence type="ECO:0000255" key="1">
    <source>
        <dbReference type="PROSITE-ProRule" id="PRU00387"/>
    </source>
</evidence>
<evidence type="ECO:0000269" key="2">
    <source>
    </source>
</evidence>
<evidence type="ECO:0000269" key="3">
    <source>
    </source>
</evidence>
<evidence type="ECO:0000303" key="4">
    <source>
    </source>
</evidence>
<evidence type="ECO:0000305" key="5">
    <source>
    </source>
</evidence>
<evidence type="ECO:0000312" key="6">
    <source>
        <dbReference type="EMBL" id="CCC77659.1"/>
    </source>
</evidence>